<keyword id="KW-1003">Cell membrane</keyword>
<keyword id="KW-0472">Membrane</keyword>
<keyword id="KW-0627">Porphyrin biosynthesis</keyword>
<keyword id="KW-1185">Reference proteome</keyword>
<keyword id="KW-0812">Transmembrane</keyword>
<keyword id="KW-1133">Transmembrane helix</keyword>
<gene>
    <name type="primary">hemX</name>
    <name type="ordered locus">BSU28160</name>
</gene>
<dbReference type="EMBL" id="M57676">
    <property type="protein sequence ID" value="AAA22511.1"/>
    <property type="molecule type" value="Genomic_DNA"/>
</dbReference>
<dbReference type="EMBL" id="Z75208">
    <property type="protein sequence ID" value="CAA99544.1"/>
    <property type="molecule type" value="Genomic_DNA"/>
</dbReference>
<dbReference type="EMBL" id="AL009126">
    <property type="protein sequence ID" value="CAB14776.2"/>
    <property type="molecule type" value="Genomic_DNA"/>
</dbReference>
<dbReference type="PIR" id="B35252">
    <property type="entry name" value="B35252"/>
</dbReference>
<dbReference type="RefSeq" id="NP_390694.2">
    <property type="nucleotide sequence ID" value="NC_000964.3"/>
</dbReference>
<dbReference type="RefSeq" id="WP_003222575.1">
    <property type="nucleotide sequence ID" value="NZ_OZ025638.1"/>
</dbReference>
<dbReference type="SMR" id="P16645"/>
<dbReference type="FunCoup" id="P16645">
    <property type="interactions" value="10"/>
</dbReference>
<dbReference type="STRING" id="224308.BSU28160"/>
<dbReference type="PaxDb" id="224308-BSU28160"/>
<dbReference type="EnsemblBacteria" id="CAB14776">
    <property type="protein sequence ID" value="CAB14776"/>
    <property type="gene ID" value="BSU_28160"/>
</dbReference>
<dbReference type="GeneID" id="937489"/>
<dbReference type="KEGG" id="bsu:BSU28160"/>
<dbReference type="PATRIC" id="fig|224308.179.peg.3059"/>
<dbReference type="eggNOG" id="COG0755">
    <property type="taxonomic scope" value="Bacteria"/>
</dbReference>
<dbReference type="InParanoid" id="P16645"/>
<dbReference type="OrthoDB" id="2417400at2"/>
<dbReference type="PhylomeDB" id="P16645"/>
<dbReference type="BioCyc" id="BSUB:BSU28160-MONOMER"/>
<dbReference type="PRO" id="PR:P16645"/>
<dbReference type="Proteomes" id="UP000001570">
    <property type="component" value="Chromosome"/>
</dbReference>
<dbReference type="GO" id="GO:0005886">
    <property type="term" value="C:plasma membrane"/>
    <property type="evidence" value="ECO:0000318"/>
    <property type="project" value="GO_Central"/>
</dbReference>
<dbReference type="GO" id="GO:0020037">
    <property type="term" value="F:heme binding"/>
    <property type="evidence" value="ECO:0007669"/>
    <property type="project" value="InterPro"/>
</dbReference>
<dbReference type="GO" id="GO:0017004">
    <property type="term" value="P:cytochrome complex assembly"/>
    <property type="evidence" value="ECO:0007669"/>
    <property type="project" value="InterPro"/>
</dbReference>
<dbReference type="GO" id="GO:0006779">
    <property type="term" value="P:porphyrin-containing compound biosynthetic process"/>
    <property type="evidence" value="ECO:0007669"/>
    <property type="project" value="UniProtKB-KW"/>
</dbReference>
<dbReference type="InterPro" id="IPR002541">
    <property type="entry name" value="Cyt_c_assembly"/>
</dbReference>
<dbReference type="InterPro" id="IPR045062">
    <property type="entry name" value="Cyt_c_biogenesis_CcsA/CcmC"/>
</dbReference>
<dbReference type="PANTHER" id="PTHR30071">
    <property type="entry name" value="HEME EXPORTER PROTEIN C"/>
    <property type="match status" value="1"/>
</dbReference>
<dbReference type="PANTHER" id="PTHR30071:SF15">
    <property type="entry name" value="PROTEIN HEMX"/>
    <property type="match status" value="1"/>
</dbReference>
<dbReference type="Pfam" id="PF01578">
    <property type="entry name" value="Cytochrom_C_asm"/>
    <property type="match status" value="1"/>
</dbReference>
<comment type="function">
    <text>Required for HemL synthesis.</text>
</comment>
<comment type="subcellular location">
    <subcellularLocation>
        <location evidence="2">Cell membrane</location>
        <topology evidence="2">Multi-pass membrane protein</topology>
    </subcellularLocation>
</comment>
<comment type="similarity">
    <text evidence="2">To M.leprae U1620K.</text>
</comment>
<evidence type="ECO:0000255" key="1"/>
<evidence type="ECO:0000305" key="2"/>
<proteinExistence type="predicted"/>
<protein>
    <recommendedName>
        <fullName>Protein HemX</fullName>
    </recommendedName>
</protein>
<name>HEMX_BACSU</name>
<accession>P16645</accession>
<sequence>MIDTAMARLNEGTIVIYALSVLFYFIDFLQHNRKAGKMAFWLLSIVWTLQTVYLAYFMWVTGRFPVLNVTEALYFYAWVLVTLSLVLTKLLRVDFIVFFTNVIGFSMIAIHTFSPTEQQSAAFSGQLVSELLVIHITMAILSYGAFSLSFVFSVLYMFQYHLLKKKKWGKWLLRIEDLSKLDYMAYVLNVIGVPMLLLSLILGVIWAYVSLETLYWFDAKVLGSFVVLLLYSYYLYIRLIKELQGKVAALWNTACFLVLMINYFLLGSLSQFHWFS</sequence>
<reference key="1">
    <citation type="journal article" date="1990" name="J. Bacteriol.">
        <title>Cloning and characterization of the hemA region of the Bacillus subtilis chromosome.</title>
        <authorList>
            <person name="Petricek M."/>
            <person name="Rutberg L."/>
            <person name="Schroeder I."/>
            <person name="Hederstedt L."/>
        </authorList>
    </citation>
    <scope>NUCLEOTIDE SEQUENCE [GENOMIC DNA]</scope>
</reference>
<reference key="2">
    <citation type="journal article" date="1996" name="Microbiology">
        <title>The dnaB-pheA (256 degrees-240 degrees) region of the Bacillus subtilis chromosome containing genes responsible for stress responses, the utilization of plant cell walls and primary metabolism.</title>
        <authorList>
            <person name="Wipat A."/>
            <person name="Carter N."/>
            <person name="Brignell C.S."/>
            <person name="Guy J.B."/>
            <person name="Piper K."/>
            <person name="Sanders J."/>
            <person name="Emmerson P.T."/>
            <person name="Harwood C.R."/>
        </authorList>
    </citation>
    <scope>NUCLEOTIDE SEQUENCE [GENOMIC DNA]</scope>
    <source>
        <strain>168</strain>
    </source>
</reference>
<reference key="3">
    <citation type="journal article" date="1997" name="Nature">
        <title>The complete genome sequence of the Gram-positive bacterium Bacillus subtilis.</title>
        <authorList>
            <person name="Kunst F."/>
            <person name="Ogasawara N."/>
            <person name="Moszer I."/>
            <person name="Albertini A.M."/>
            <person name="Alloni G."/>
            <person name="Azevedo V."/>
            <person name="Bertero M.G."/>
            <person name="Bessieres P."/>
            <person name="Bolotin A."/>
            <person name="Borchert S."/>
            <person name="Borriss R."/>
            <person name="Boursier L."/>
            <person name="Brans A."/>
            <person name="Braun M."/>
            <person name="Brignell S.C."/>
            <person name="Bron S."/>
            <person name="Brouillet S."/>
            <person name="Bruschi C.V."/>
            <person name="Caldwell B."/>
            <person name="Capuano V."/>
            <person name="Carter N.M."/>
            <person name="Choi S.-K."/>
            <person name="Codani J.-J."/>
            <person name="Connerton I.F."/>
            <person name="Cummings N.J."/>
            <person name="Daniel R.A."/>
            <person name="Denizot F."/>
            <person name="Devine K.M."/>
            <person name="Duesterhoeft A."/>
            <person name="Ehrlich S.D."/>
            <person name="Emmerson P.T."/>
            <person name="Entian K.-D."/>
            <person name="Errington J."/>
            <person name="Fabret C."/>
            <person name="Ferrari E."/>
            <person name="Foulger D."/>
            <person name="Fritz C."/>
            <person name="Fujita M."/>
            <person name="Fujita Y."/>
            <person name="Fuma S."/>
            <person name="Galizzi A."/>
            <person name="Galleron N."/>
            <person name="Ghim S.-Y."/>
            <person name="Glaser P."/>
            <person name="Goffeau A."/>
            <person name="Golightly E.J."/>
            <person name="Grandi G."/>
            <person name="Guiseppi G."/>
            <person name="Guy B.J."/>
            <person name="Haga K."/>
            <person name="Haiech J."/>
            <person name="Harwood C.R."/>
            <person name="Henaut A."/>
            <person name="Hilbert H."/>
            <person name="Holsappel S."/>
            <person name="Hosono S."/>
            <person name="Hullo M.-F."/>
            <person name="Itaya M."/>
            <person name="Jones L.-M."/>
            <person name="Joris B."/>
            <person name="Karamata D."/>
            <person name="Kasahara Y."/>
            <person name="Klaerr-Blanchard M."/>
            <person name="Klein C."/>
            <person name="Kobayashi Y."/>
            <person name="Koetter P."/>
            <person name="Koningstein G."/>
            <person name="Krogh S."/>
            <person name="Kumano M."/>
            <person name="Kurita K."/>
            <person name="Lapidus A."/>
            <person name="Lardinois S."/>
            <person name="Lauber J."/>
            <person name="Lazarevic V."/>
            <person name="Lee S.-M."/>
            <person name="Levine A."/>
            <person name="Liu H."/>
            <person name="Masuda S."/>
            <person name="Mauel C."/>
            <person name="Medigue C."/>
            <person name="Medina N."/>
            <person name="Mellado R.P."/>
            <person name="Mizuno M."/>
            <person name="Moestl D."/>
            <person name="Nakai S."/>
            <person name="Noback M."/>
            <person name="Noone D."/>
            <person name="O'Reilly M."/>
            <person name="Ogawa K."/>
            <person name="Ogiwara A."/>
            <person name="Oudega B."/>
            <person name="Park S.-H."/>
            <person name="Parro V."/>
            <person name="Pohl T.M."/>
            <person name="Portetelle D."/>
            <person name="Porwollik S."/>
            <person name="Prescott A.M."/>
            <person name="Presecan E."/>
            <person name="Pujic P."/>
            <person name="Purnelle B."/>
            <person name="Rapoport G."/>
            <person name="Rey M."/>
            <person name="Reynolds S."/>
            <person name="Rieger M."/>
            <person name="Rivolta C."/>
            <person name="Rocha E."/>
            <person name="Roche B."/>
            <person name="Rose M."/>
            <person name="Sadaie Y."/>
            <person name="Sato T."/>
            <person name="Scanlan E."/>
            <person name="Schleich S."/>
            <person name="Schroeter R."/>
            <person name="Scoffone F."/>
            <person name="Sekiguchi J."/>
            <person name="Sekowska A."/>
            <person name="Seror S.J."/>
            <person name="Serror P."/>
            <person name="Shin B.-S."/>
            <person name="Soldo B."/>
            <person name="Sorokin A."/>
            <person name="Tacconi E."/>
            <person name="Takagi T."/>
            <person name="Takahashi H."/>
            <person name="Takemaru K."/>
            <person name="Takeuchi M."/>
            <person name="Tamakoshi A."/>
            <person name="Tanaka T."/>
            <person name="Terpstra P."/>
            <person name="Tognoni A."/>
            <person name="Tosato V."/>
            <person name="Uchiyama S."/>
            <person name="Vandenbol M."/>
            <person name="Vannier F."/>
            <person name="Vassarotti A."/>
            <person name="Viari A."/>
            <person name="Wambutt R."/>
            <person name="Wedler E."/>
            <person name="Wedler H."/>
            <person name="Weitzenegger T."/>
            <person name="Winters P."/>
            <person name="Wipat A."/>
            <person name="Yamamoto H."/>
            <person name="Yamane K."/>
            <person name="Yasumoto K."/>
            <person name="Yata K."/>
            <person name="Yoshida K."/>
            <person name="Yoshikawa H.-F."/>
            <person name="Zumstein E."/>
            <person name="Yoshikawa H."/>
            <person name="Danchin A."/>
        </authorList>
    </citation>
    <scope>NUCLEOTIDE SEQUENCE [LARGE SCALE GENOMIC DNA]</scope>
    <source>
        <strain>168</strain>
    </source>
</reference>
<reference key="4">
    <citation type="journal article" date="2009" name="Microbiology">
        <title>From a consortium sequence to a unified sequence: the Bacillus subtilis 168 reference genome a decade later.</title>
        <authorList>
            <person name="Barbe V."/>
            <person name="Cruveiller S."/>
            <person name="Kunst F."/>
            <person name="Lenoble P."/>
            <person name="Meurice G."/>
            <person name="Sekowska A."/>
            <person name="Vallenet D."/>
            <person name="Wang T."/>
            <person name="Moszer I."/>
            <person name="Medigue C."/>
            <person name="Danchin A."/>
        </authorList>
    </citation>
    <scope>SEQUENCE REVISION TO 162</scope>
</reference>
<organism>
    <name type="scientific">Bacillus subtilis (strain 168)</name>
    <dbReference type="NCBI Taxonomy" id="224308"/>
    <lineage>
        <taxon>Bacteria</taxon>
        <taxon>Bacillati</taxon>
        <taxon>Bacillota</taxon>
        <taxon>Bacilli</taxon>
        <taxon>Bacillales</taxon>
        <taxon>Bacillaceae</taxon>
        <taxon>Bacillus</taxon>
    </lineage>
</organism>
<feature type="chain" id="PRO_0000083949" description="Protein HemX">
    <location>
        <begin position="1"/>
        <end position="276"/>
    </location>
</feature>
<feature type="transmembrane region" description="Helical" evidence="1">
    <location>
        <begin position="9"/>
        <end position="29"/>
    </location>
</feature>
<feature type="transmembrane region" description="Helical" evidence="1">
    <location>
        <begin position="40"/>
        <end position="60"/>
    </location>
</feature>
<feature type="transmembrane region" description="Helical" evidence="1">
    <location>
        <begin position="66"/>
        <end position="86"/>
    </location>
</feature>
<feature type="transmembrane region" description="Helical" evidence="1">
    <location>
        <begin position="93"/>
        <end position="113"/>
    </location>
</feature>
<feature type="transmembrane region" description="Helical" evidence="1">
    <location>
        <begin position="132"/>
        <end position="152"/>
    </location>
</feature>
<feature type="transmembrane region" description="Helical" evidence="1">
    <location>
        <begin position="187"/>
        <end position="207"/>
    </location>
</feature>
<feature type="transmembrane region" description="Helical" evidence="1">
    <location>
        <begin position="217"/>
        <end position="237"/>
    </location>
</feature>
<feature type="transmembrane region" description="Helical" evidence="1">
    <location>
        <begin position="247"/>
        <end position="267"/>
    </location>
</feature>
<feature type="sequence conflict" description="In Ref. 1; AAA22511 and 2; CAA99544." evidence="2" ref="1 2">
    <original>L</original>
    <variation>V</variation>
    <location>
        <position position="162"/>
    </location>
</feature>